<name>RL31_LEPIN</name>
<feature type="chain" id="PRO_0000173122" description="Large ribosomal subunit protein bL31">
    <location>
        <begin position="1"/>
        <end position="67"/>
    </location>
</feature>
<keyword id="KW-1185">Reference proteome</keyword>
<keyword id="KW-0687">Ribonucleoprotein</keyword>
<keyword id="KW-0689">Ribosomal protein</keyword>
<keyword id="KW-0694">RNA-binding</keyword>
<keyword id="KW-0699">rRNA-binding</keyword>
<organism>
    <name type="scientific">Leptospira interrogans serogroup Icterohaemorrhagiae serovar Lai (strain 56601)</name>
    <dbReference type="NCBI Taxonomy" id="189518"/>
    <lineage>
        <taxon>Bacteria</taxon>
        <taxon>Pseudomonadati</taxon>
        <taxon>Spirochaetota</taxon>
        <taxon>Spirochaetia</taxon>
        <taxon>Leptospirales</taxon>
        <taxon>Leptospiraceae</taxon>
        <taxon>Leptospira</taxon>
    </lineage>
</organism>
<reference key="1">
    <citation type="journal article" date="2003" name="Nature">
        <title>Unique physiological and pathogenic features of Leptospira interrogans revealed by whole-genome sequencing.</title>
        <authorList>
            <person name="Ren S.-X."/>
            <person name="Fu G."/>
            <person name="Jiang X.-G."/>
            <person name="Zeng R."/>
            <person name="Miao Y.-G."/>
            <person name="Xu H."/>
            <person name="Zhang Y.-X."/>
            <person name="Xiong H."/>
            <person name="Lu G."/>
            <person name="Lu L.-F."/>
            <person name="Jiang H.-Q."/>
            <person name="Jia J."/>
            <person name="Tu Y.-F."/>
            <person name="Jiang J.-X."/>
            <person name="Gu W.-Y."/>
            <person name="Zhang Y.-Q."/>
            <person name="Cai Z."/>
            <person name="Sheng H.-H."/>
            <person name="Yin H.-F."/>
            <person name="Zhang Y."/>
            <person name="Zhu G.-F."/>
            <person name="Wan M."/>
            <person name="Huang H.-L."/>
            <person name="Qian Z."/>
            <person name="Wang S.-Y."/>
            <person name="Ma W."/>
            <person name="Yao Z.-J."/>
            <person name="Shen Y."/>
            <person name="Qiang B.-Q."/>
            <person name="Xia Q.-C."/>
            <person name="Guo X.-K."/>
            <person name="Danchin A."/>
            <person name="Saint Girons I."/>
            <person name="Somerville R.L."/>
            <person name="Wen Y.-M."/>
            <person name="Shi M.-H."/>
            <person name="Chen Z."/>
            <person name="Xu J.-G."/>
            <person name="Zhao G.-P."/>
        </authorList>
    </citation>
    <scope>NUCLEOTIDE SEQUENCE [LARGE SCALE GENOMIC DNA]</scope>
    <source>
        <strain>56601</strain>
    </source>
</reference>
<gene>
    <name evidence="1" type="primary">rpmE</name>
    <name type="ordered locus">LA_1020</name>
</gene>
<accession>Q8F7C6</accession>
<comment type="function">
    <text evidence="1">Binds the 23S rRNA.</text>
</comment>
<comment type="subunit">
    <text evidence="1">Part of the 50S ribosomal subunit.</text>
</comment>
<comment type="similarity">
    <text evidence="1">Belongs to the bacterial ribosomal protein bL31 family. Type A subfamily.</text>
</comment>
<dbReference type="EMBL" id="AE010300">
    <property type="protein sequence ID" value="AAN48219.1"/>
    <property type="molecule type" value="Genomic_DNA"/>
</dbReference>
<dbReference type="RefSeq" id="NP_711201.1">
    <property type="nucleotide sequence ID" value="NC_004342.2"/>
</dbReference>
<dbReference type="RefSeq" id="WP_000845534.1">
    <property type="nucleotide sequence ID" value="NC_004342.2"/>
</dbReference>
<dbReference type="SMR" id="Q8F7C6"/>
<dbReference type="FunCoup" id="Q8F7C6">
    <property type="interactions" value="370"/>
</dbReference>
<dbReference type="STRING" id="189518.LA_1020"/>
<dbReference type="PaxDb" id="189518-LA_1020"/>
<dbReference type="EnsemblBacteria" id="AAN48219">
    <property type="protein sequence ID" value="AAN48219"/>
    <property type="gene ID" value="LA_1020"/>
</dbReference>
<dbReference type="GeneID" id="61173326"/>
<dbReference type="KEGG" id="lil:LA_1020"/>
<dbReference type="PATRIC" id="fig|189518.3.peg.1018"/>
<dbReference type="HOGENOM" id="CLU_114306_4_0_12"/>
<dbReference type="InParanoid" id="Q8F7C6"/>
<dbReference type="OrthoDB" id="9803251at2"/>
<dbReference type="PRO" id="PR:Q8F7C6"/>
<dbReference type="Proteomes" id="UP000001408">
    <property type="component" value="Chromosome I"/>
</dbReference>
<dbReference type="GO" id="GO:1990904">
    <property type="term" value="C:ribonucleoprotein complex"/>
    <property type="evidence" value="ECO:0007669"/>
    <property type="project" value="UniProtKB-KW"/>
</dbReference>
<dbReference type="GO" id="GO:0005840">
    <property type="term" value="C:ribosome"/>
    <property type="evidence" value="ECO:0007669"/>
    <property type="project" value="UniProtKB-KW"/>
</dbReference>
<dbReference type="GO" id="GO:0019843">
    <property type="term" value="F:rRNA binding"/>
    <property type="evidence" value="ECO:0007669"/>
    <property type="project" value="UniProtKB-KW"/>
</dbReference>
<dbReference type="GO" id="GO:0003735">
    <property type="term" value="F:structural constituent of ribosome"/>
    <property type="evidence" value="ECO:0007669"/>
    <property type="project" value="InterPro"/>
</dbReference>
<dbReference type="GO" id="GO:0006412">
    <property type="term" value="P:translation"/>
    <property type="evidence" value="ECO:0007669"/>
    <property type="project" value="UniProtKB-UniRule"/>
</dbReference>
<dbReference type="Gene3D" id="4.10.830.30">
    <property type="entry name" value="Ribosomal protein L31"/>
    <property type="match status" value="1"/>
</dbReference>
<dbReference type="HAMAP" id="MF_00501">
    <property type="entry name" value="Ribosomal_bL31_1"/>
    <property type="match status" value="1"/>
</dbReference>
<dbReference type="InterPro" id="IPR034704">
    <property type="entry name" value="Ribosomal_bL28/bL31-like_sf"/>
</dbReference>
<dbReference type="InterPro" id="IPR002150">
    <property type="entry name" value="Ribosomal_bL31"/>
</dbReference>
<dbReference type="InterPro" id="IPR027491">
    <property type="entry name" value="Ribosomal_bL31_A"/>
</dbReference>
<dbReference type="InterPro" id="IPR042105">
    <property type="entry name" value="Ribosomal_bL31_sf"/>
</dbReference>
<dbReference type="NCBIfam" id="TIGR00105">
    <property type="entry name" value="L31"/>
    <property type="match status" value="1"/>
</dbReference>
<dbReference type="NCBIfam" id="NF000612">
    <property type="entry name" value="PRK00019.1"/>
    <property type="match status" value="1"/>
</dbReference>
<dbReference type="PANTHER" id="PTHR33280">
    <property type="entry name" value="50S RIBOSOMAL PROTEIN L31, CHLOROPLASTIC"/>
    <property type="match status" value="1"/>
</dbReference>
<dbReference type="PANTHER" id="PTHR33280:SF1">
    <property type="entry name" value="LARGE RIBOSOMAL SUBUNIT PROTEIN BL31C"/>
    <property type="match status" value="1"/>
</dbReference>
<dbReference type="Pfam" id="PF01197">
    <property type="entry name" value="Ribosomal_L31"/>
    <property type="match status" value="1"/>
</dbReference>
<dbReference type="PRINTS" id="PR01249">
    <property type="entry name" value="RIBOSOMALL31"/>
</dbReference>
<dbReference type="SUPFAM" id="SSF143800">
    <property type="entry name" value="L28p-like"/>
    <property type="match status" value="1"/>
</dbReference>
<dbReference type="PROSITE" id="PS01143">
    <property type="entry name" value="RIBOSOMAL_L31"/>
    <property type="match status" value="1"/>
</dbReference>
<protein>
    <recommendedName>
        <fullName evidence="1">Large ribosomal subunit protein bL31</fullName>
    </recommendedName>
    <alternativeName>
        <fullName evidence="2">50S ribosomal protein L31</fullName>
    </alternativeName>
</protein>
<evidence type="ECO:0000255" key="1">
    <source>
        <dbReference type="HAMAP-Rule" id="MF_00501"/>
    </source>
</evidence>
<evidence type="ECO:0000305" key="2"/>
<sequence>MKTEIHPNYKAAKISCASCGTVYETRTSIGDINIEICSACHPFFTGKSKLVDTTGRVDKFKKKYKMQ</sequence>
<proteinExistence type="inferred from homology"/>